<protein>
    <recommendedName>
        <fullName evidence="1">Sulfate adenylyltransferase subunit 2</fullName>
        <ecNumber evidence="1">2.7.7.4</ecNumber>
    </recommendedName>
    <alternativeName>
        <fullName evidence="1">ATP-sulfurylase small subunit</fullName>
    </alternativeName>
    <alternativeName>
        <fullName evidence="1">Sulfate adenylate transferase</fullName>
        <shortName evidence="1">SAT</shortName>
    </alternativeName>
</protein>
<sequence>MSAALAAAVQPSAPASAQTADRLSHLKRLEAEAIHIFRETVAETENPVMLYSIGKDSSVLLHLALKAFAPGRLPFPLLHVDTTWKFREMIAFRDARAKELGLDLLVHTNPDGLARGVGPVSHGSEVHTDVMKTQALRQALDKHKFDAAFGGARRDEEASRAKERIISLRTAQHRWDPKRQRAEPWHLYNLKKKRGESLRVFPLSNWTELDIWLYIEQENIPIVPLYFAQERPVVEREGQLIMVDDERLPLEPGETPQQRLVRFRTLGCYPLTGAVESDAATLPEIIGETLAARTSERQGRVIDKDGAGAMERKKQEGYF</sequence>
<accession>B1LSA1</accession>
<organism>
    <name type="scientific">Methylobacterium radiotolerans (strain ATCC 27329 / DSM 1819 / JCM 2831 / NBRC 15690 / NCIMB 10815 / 0-1)</name>
    <dbReference type="NCBI Taxonomy" id="426355"/>
    <lineage>
        <taxon>Bacteria</taxon>
        <taxon>Pseudomonadati</taxon>
        <taxon>Pseudomonadota</taxon>
        <taxon>Alphaproteobacteria</taxon>
        <taxon>Hyphomicrobiales</taxon>
        <taxon>Methylobacteriaceae</taxon>
        <taxon>Methylobacterium</taxon>
    </lineage>
</organism>
<reference key="1">
    <citation type="submission" date="2008-03" db="EMBL/GenBank/DDBJ databases">
        <title>Complete sequence of chromosome of Methylobacterium radiotolerans JCM 2831.</title>
        <authorList>
            <consortium name="US DOE Joint Genome Institute"/>
            <person name="Copeland A."/>
            <person name="Lucas S."/>
            <person name="Lapidus A."/>
            <person name="Glavina del Rio T."/>
            <person name="Dalin E."/>
            <person name="Tice H."/>
            <person name="Bruce D."/>
            <person name="Goodwin L."/>
            <person name="Pitluck S."/>
            <person name="Kiss H."/>
            <person name="Brettin T."/>
            <person name="Detter J.C."/>
            <person name="Han C."/>
            <person name="Kuske C.R."/>
            <person name="Schmutz J."/>
            <person name="Larimer F."/>
            <person name="Land M."/>
            <person name="Hauser L."/>
            <person name="Kyrpides N."/>
            <person name="Mikhailova N."/>
            <person name="Marx C.J."/>
            <person name="Richardson P."/>
        </authorList>
    </citation>
    <scope>NUCLEOTIDE SEQUENCE [LARGE SCALE GENOMIC DNA]</scope>
    <source>
        <strain>ATCC 27329 / DSM 1819 / JCM 2831 / NBRC 15690 / NCIMB 10815 / 0-1</strain>
    </source>
</reference>
<evidence type="ECO:0000255" key="1">
    <source>
        <dbReference type="HAMAP-Rule" id="MF_00064"/>
    </source>
</evidence>
<proteinExistence type="inferred from homology"/>
<name>CYSD_METRJ</name>
<keyword id="KW-0067">ATP-binding</keyword>
<keyword id="KW-0547">Nucleotide-binding</keyword>
<keyword id="KW-0548">Nucleotidyltransferase</keyword>
<keyword id="KW-0808">Transferase</keyword>
<feature type="chain" id="PRO_0000340203" description="Sulfate adenylyltransferase subunit 2">
    <location>
        <begin position="1"/>
        <end position="319"/>
    </location>
</feature>
<comment type="function">
    <text evidence="1">With CysN forms the ATP sulfurylase (ATPS) that catalyzes the adenylation of sulfate producing adenosine 5'-phosphosulfate (APS) and diphosphate, the first enzymatic step in sulfur assimilation pathway. APS synthesis involves the formation of a high-energy phosphoric-sulfuric acid anhydride bond driven by GTP hydrolysis by CysN coupled to ATP hydrolysis by CysD.</text>
</comment>
<comment type="catalytic activity">
    <reaction evidence="1">
        <text>sulfate + ATP + H(+) = adenosine 5'-phosphosulfate + diphosphate</text>
        <dbReference type="Rhea" id="RHEA:18133"/>
        <dbReference type="ChEBI" id="CHEBI:15378"/>
        <dbReference type="ChEBI" id="CHEBI:16189"/>
        <dbReference type="ChEBI" id="CHEBI:30616"/>
        <dbReference type="ChEBI" id="CHEBI:33019"/>
        <dbReference type="ChEBI" id="CHEBI:58243"/>
        <dbReference type="EC" id="2.7.7.4"/>
    </reaction>
</comment>
<comment type="pathway">
    <text evidence="1">Sulfur metabolism; hydrogen sulfide biosynthesis; sulfite from sulfate: step 1/3.</text>
</comment>
<comment type="subunit">
    <text evidence="1">Heterodimer composed of CysD, the smaller subunit, and CysN.</text>
</comment>
<comment type="similarity">
    <text evidence="1">Belongs to the PAPS reductase family. CysD subfamily.</text>
</comment>
<gene>
    <name evidence="1" type="primary">cysD</name>
    <name type="ordered locus">Mrad2831_1787</name>
</gene>
<dbReference type="EC" id="2.7.7.4" evidence="1"/>
<dbReference type="EMBL" id="CP001001">
    <property type="protein sequence ID" value="ACB23782.1"/>
    <property type="molecule type" value="Genomic_DNA"/>
</dbReference>
<dbReference type="RefSeq" id="WP_012318768.1">
    <property type="nucleotide sequence ID" value="NC_010505.1"/>
</dbReference>
<dbReference type="SMR" id="B1LSA1"/>
<dbReference type="STRING" id="426355.Mrad2831_1787"/>
<dbReference type="GeneID" id="6137816"/>
<dbReference type="KEGG" id="mrd:Mrad2831_1787"/>
<dbReference type="eggNOG" id="COG0175">
    <property type="taxonomic scope" value="Bacteria"/>
</dbReference>
<dbReference type="HOGENOM" id="CLU_043026_0_0_5"/>
<dbReference type="OrthoDB" id="9772604at2"/>
<dbReference type="UniPathway" id="UPA00140">
    <property type="reaction ID" value="UER00204"/>
</dbReference>
<dbReference type="Proteomes" id="UP000006589">
    <property type="component" value="Chromosome"/>
</dbReference>
<dbReference type="GO" id="GO:0005524">
    <property type="term" value="F:ATP binding"/>
    <property type="evidence" value="ECO:0007669"/>
    <property type="project" value="UniProtKB-KW"/>
</dbReference>
<dbReference type="GO" id="GO:0004781">
    <property type="term" value="F:sulfate adenylyltransferase (ATP) activity"/>
    <property type="evidence" value="ECO:0007669"/>
    <property type="project" value="UniProtKB-UniRule"/>
</dbReference>
<dbReference type="GO" id="GO:0070814">
    <property type="term" value="P:hydrogen sulfide biosynthetic process"/>
    <property type="evidence" value="ECO:0007669"/>
    <property type="project" value="UniProtKB-UniRule"/>
</dbReference>
<dbReference type="GO" id="GO:0000103">
    <property type="term" value="P:sulfate assimilation"/>
    <property type="evidence" value="ECO:0007669"/>
    <property type="project" value="UniProtKB-UniRule"/>
</dbReference>
<dbReference type="CDD" id="cd23946">
    <property type="entry name" value="Sulfate_adenylyltransferase_2"/>
    <property type="match status" value="1"/>
</dbReference>
<dbReference type="FunFam" id="3.40.50.620:FF:000002">
    <property type="entry name" value="Sulfate adenylyltransferase subunit 2"/>
    <property type="match status" value="1"/>
</dbReference>
<dbReference type="Gene3D" id="3.40.50.620">
    <property type="entry name" value="HUPs"/>
    <property type="match status" value="1"/>
</dbReference>
<dbReference type="HAMAP" id="MF_00064">
    <property type="entry name" value="Sulf_adenylyltr_sub2"/>
    <property type="match status" value="1"/>
</dbReference>
<dbReference type="InterPro" id="IPR002500">
    <property type="entry name" value="PAPS_reduct_dom"/>
</dbReference>
<dbReference type="InterPro" id="IPR014729">
    <property type="entry name" value="Rossmann-like_a/b/a_fold"/>
</dbReference>
<dbReference type="InterPro" id="IPR011784">
    <property type="entry name" value="SO4_adenylTrfase_ssu"/>
</dbReference>
<dbReference type="InterPro" id="IPR050128">
    <property type="entry name" value="Sulfate_adenylyltrnsfr_sub2"/>
</dbReference>
<dbReference type="NCBIfam" id="TIGR02039">
    <property type="entry name" value="CysD"/>
    <property type="match status" value="1"/>
</dbReference>
<dbReference type="NCBIfam" id="NF003587">
    <property type="entry name" value="PRK05253.1"/>
    <property type="match status" value="1"/>
</dbReference>
<dbReference type="NCBIfam" id="NF009214">
    <property type="entry name" value="PRK12563.1"/>
    <property type="match status" value="1"/>
</dbReference>
<dbReference type="PANTHER" id="PTHR43196">
    <property type="entry name" value="SULFATE ADENYLYLTRANSFERASE SUBUNIT 2"/>
    <property type="match status" value="1"/>
</dbReference>
<dbReference type="PANTHER" id="PTHR43196:SF1">
    <property type="entry name" value="SULFATE ADENYLYLTRANSFERASE SUBUNIT 2"/>
    <property type="match status" value="1"/>
</dbReference>
<dbReference type="Pfam" id="PF01507">
    <property type="entry name" value="PAPS_reduct"/>
    <property type="match status" value="1"/>
</dbReference>
<dbReference type="PIRSF" id="PIRSF002936">
    <property type="entry name" value="CysDAde_trans"/>
    <property type="match status" value="1"/>
</dbReference>
<dbReference type="SUPFAM" id="SSF52402">
    <property type="entry name" value="Adenine nucleotide alpha hydrolases-like"/>
    <property type="match status" value="1"/>
</dbReference>